<gene>
    <name type="primary">fliI</name>
    <name type="ordered locus">BSU16240</name>
</gene>
<proteinExistence type="inferred from homology"/>
<keyword id="KW-0066">ATP synthesis</keyword>
<keyword id="KW-0067">ATP-binding</keyword>
<keyword id="KW-1005">Bacterial flagellum biogenesis</keyword>
<keyword id="KW-1006">Bacterial flagellum protein export</keyword>
<keyword id="KW-0963">Cytoplasm</keyword>
<keyword id="KW-0375">Hydrogen ion transport</keyword>
<keyword id="KW-0406">Ion transport</keyword>
<keyword id="KW-0547">Nucleotide-binding</keyword>
<keyword id="KW-0653">Protein transport</keyword>
<keyword id="KW-1185">Reference proteome</keyword>
<keyword id="KW-1278">Translocase</keyword>
<keyword id="KW-0813">Transport</keyword>
<protein>
    <recommendedName>
        <fullName>Flagellum-specific ATP synthase</fullName>
        <ecNumber>7.1.2.2</ecNumber>
    </recommendedName>
</protein>
<organism>
    <name type="scientific">Bacillus subtilis (strain 168)</name>
    <dbReference type="NCBI Taxonomy" id="224308"/>
    <lineage>
        <taxon>Bacteria</taxon>
        <taxon>Bacillati</taxon>
        <taxon>Bacillota</taxon>
        <taxon>Bacilli</taxon>
        <taxon>Bacillales</taxon>
        <taxon>Bacillaceae</taxon>
        <taxon>Bacillus</taxon>
    </lineage>
</organism>
<accession>P23445</accession>
<name>FLII_BACSU</name>
<reference key="1">
    <citation type="journal article" date="1991" name="J. Bacteriol.">
        <title>The flaA locus of Bacillus subtilis is part of a large operon coding for flagellar structures, motility functions, and an ATPase-like polypeptide.</title>
        <authorList>
            <person name="Albertini A.M."/>
            <person name="Caramori T."/>
            <person name="Crabb W.D."/>
            <person name="Scoffone F."/>
            <person name="Galizzi A."/>
        </authorList>
    </citation>
    <scope>NUCLEOTIDE SEQUENCE [GENOMIC DNA]</scope>
    <source>
        <strain>168</strain>
    </source>
</reference>
<reference key="2">
    <citation type="journal article" date="1997" name="Nature">
        <title>The complete genome sequence of the Gram-positive bacterium Bacillus subtilis.</title>
        <authorList>
            <person name="Kunst F."/>
            <person name="Ogasawara N."/>
            <person name="Moszer I."/>
            <person name="Albertini A.M."/>
            <person name="Alloni G."/>
            <person name="Azevedo V."/>
            <person name="Bertero M.G."/>
            <person name="Bessieres P."/>
            <person name="Bolotin A."/>
            <person name="Borchert S."/>
            <person name="Borriss R."/>
            <person name="Boursier L."/>
            <person name="Brans A."/>
            <person name="Braun M."/>
            <person name="Brignell S.C."/>
            <person name="Bron S."/>
            <person name="Brouillet S."/>
            <person name="Bruschi C.V."/>
            <person name="Caldwell B."/>
            <person name="Capuano V."/>
            <person name="Carter N.M."/>
            <person name="Choi S.-K."/>
            <person name="Codani J.-J."/>
            <person name="Connerton I.F."/>
            <person name="Cummings N.J."/>
            <person name="Daniel R.A."/>
            <person name="Denizot F."/>
            <person name="Devine K.M."/>
            <person name="Duesterhoeft A."/>
            <person name="Ehrlich S.D."/>
            <person name="Emmerson P.T."/>
            <person name="Entian K.-D."/>
            <person name="Errington J."/>
            <person name="Fabret C."/>
            <person name="Ferrari E."/>
            <person name="Foulger D."/>
            <person name="Fritz C."/>
            <person name="Fujita M."/>
            <person name="Fujita Y."/>
            <person name="Fuma S."/>
            <person name="Galizzi A."/>
            <person name="Galleron N."/>
            <person name="Ghim S.-Y."/>
            <person name="Glaser P."/>
            <person name="Goffeau A."/>
            <person name="Golightly E.J."/>
            <person name="Grandi G."/>
            <person name="Guiseppi G."/>
            <person name="Guy B.J."/>
            <person name="Haga K."/>
            <person name="Haiech J."/>
            <person name="Harwood C.R."/>
            <person name="Henaut A."/>
            <person name="Hilbert H."/>
            <person name="Holsappel S."/>
            <person name="Hosono S."/>
            <person name="Hullo M.-F."/>
            <person name="Itaya M."/>
            <person name="Jones L.-M."/>
            <person name="Joris B."/>
            <person name="Karamata D."/>
            <person name="Kasahara Y."/>
            <person name="Klaerr-Blanchard M."/>
            <person name="Klein C."/>
            <person name="Kobayashi Y."/>
            <person name="Koetter P."/>
            <person name="Koningstein G."/>
            <person name="Krogh S."/>
            <person name="Kumano M."/>
            <person name="Kurita K."/>
            <person name="Lapidus A."/>
            <person name="Lardinois S."/>
            <person name="Lauber J."/>
            <person name="Lazarevic V."/>
            <person name="Lee S.-M."/>
            <person name="Levine A."/>
            <person name="Liu H."/>
            <person name="Masuda S."/>
            <person name="Mauel C."/>
            <person name="Medigue C."/>
            <person name="Medina N."/>
            <person name="Mellado R.P."/>
            <person name="Mizuno M."/>
            <person name="Moestl D."/>
            <person name="Nakai S."/>
            <person name="Noback M."/>
            <person name="Noone D."/>
            <person name="O'Reilly M."/>
            <person name="Ogawa K."/>
            <person name="Ogiwara A."/>
            <person name="Oudega B."/>
            <person name="Park S.-H."/>
            <person name="Parro V."/>
            <person name="Pohl T.M."/>
            <person name="Portetelle D."/>
            <person name="Porwollik S."/>
            <person name="Prescott A.M."/>
            <person name="Presecan E."/>
            <person name="Pujic P."/>
            <person name="Purnelle B."/>
            <person name="Rapoport G."/>
            <person name="Rey M."/>
            <person name="Reynolds S."/>
            <person name="Rieger M."/>
            <person name="Rivolta C."/>
            <person name="Rocha E."/>
            <person name="Roche B."/>
            <person name="Rose M."/>
            <person name="Sadaie Y."/>
            <person name="Sato T."/>
            <person name="Scanlan E."/>
            <person name="Schleich S."/>
            <person name="Schroeter R."/>
            <person name="Scoffone F."/>
            <person name="Sekiguchi J."/>
            <person name="Sekowska A."/>
            <person name="Seror S.J."/>
            <person name="Serror P."/>
            <person name="Shin B.-S."/>
            <person name="Soldo B."/>
            <person name="Sorokin A."/>
            <person name="Tacconi E."/>
            <person name="Takagi T."/>
            <person name="Takahashi H."/>
            <person name="Takemaru K."/>
            <person name="Takeuchi M."/>
            <person name="Tamakoshi A."/>
            <person name="Tanaka T."/>
            <person name="Terpstra P."/>
            <person name="Tognoni A."/>
            <person name="Tosato V."/>
            <person name="Uchiyama S."/>
            <person name="Vandenbol M."/>
            <person name="Vannier F."/>
            <person name="Vassarotti A."/>
            <person name="Viari A."/>
            <person name="Wambutt R."/>
            <person name="Wedler E."/>
            <person name="Wedler H."/>
            <person name="Weitzenegger T."/>
            <person name="Winters P."/>
            <person name="Wipat A."/>
            <person name="Yamamoto H."/>
            <person name="Yamane K."/>
            <person name="Yasumoto K."/>
            <person name="Yata K."/>
            <person name="Yoshida K."/>
            <person name="Yoshikawa H.-F."/>
            <person name="Zumstein E."/>
            <person name="Yoshikawa H."/>
            <person name="Danchin A."/>
        </authorList>
    </citation>
    <scope>NUCLEOTIDE SEQUENCE [LARGE SCALE GENOMIC DNA]</scope>
    <source>
        <strain>168</strain>
    </source>
</reference>
<reference key="3">
    <citation type="journal article" date="2009" name="Microbiology">
        <title>From a consortium sequence to a unified sequence: the Bacillus subtilis 168 reference genome a decade later.</title>
        <authorList>
            <person name="Barbe V."/>
            <person name="Cruveiller S."/>
            <person name="Kunst F."/>
            <person name="Lenoble P."/>
            <person name="Meurice G."/>
            <person name="Sekowska A."/>
            <person name="Vallenet D."/>
            <person name="Wang T."/>
            <person name="Moszer I."/>
            <person name="Medigue C."/>
            <person name="Danchin A."/>
        </authorList>
    </citation>
    <scope>SEQUENCE REVISION TO 113-120 AND N-TERMINUS</scope>
</reference>
<evidence type="ECO:0000250" key="1"/>
<evidence type="ECO:0000255" key="2">
    <source>
        <dbReference type="PROSITE-ProRule" id="PRU10106"/>
    </source>
</evidence>
<evidence type="ECO:0000256" key="3">
    <source>
        <dbReference type="SAM" id="MobiDB-lite"/>
    </source>
</evidence>
<evidence type="ECO:0000305" key="4"/>
<dbReference type="EC" id="7.1.2.2"/>
<dbReference type="EMBL" id="X56049">
    <property type="protein sequence ID" value="CAA39523.1"/>
    <property type="molecule type" value="Genomic_DNA"/>
</dbReference>
<dbReference type="EMBL" id="AL009126">
    <property type="protein sequence ID" value="CAB13497.2"/>
    <property type="molecule type" value="Genomic_DNA"/>
</dbReference>
<dbReference type="PIR" id="D42365">
    <property type="entry name" value="PWBSAS"/>
</dbReference>
<dbReference type="RefSeq" id="NP_389506.2">
    <property type="nucleotide sequence ID" value="NC_000964.3"/>
</dbReference>
<dbReference type="RefSeq" id="WP_003244825.1">
    <property type="nucleotide sequence ID" value="NZ_OZ025638.1"/>
</dbReference>
<dbReference type="SMR" id="P23445"/>
<dbReference type="FunCoup" id="P23445">
    <property type="interactions" value="217"/>
</dbReference>
<dbReference type="STRING" id="224308.BSU16240"/>
<dbReference type="PaxDb" id="224308-BSU16240"/>
<dbReference type="EnsemblBacteria" id="CAB13497">
    <property type="protein sequence ID" value="CAB13497"/>
    <property type="gene ID" value="BSU_16240"/>
</dbReference>
<dbReference type="GeneID" id="940136"/>
<dbReference type="KEGG" id="bsu:BSU16240"/>
<dbReference type="PATRIC" id="fig|224308.179.peg.1764"/>
<dbReference type="eggNOG" id="COG1157">
    <property type="taxonomic scope" value="Bacteria"/>
</dbReference>
<dbReference type="InParanoid" id="P23445"/>
<dbReference type="OrthoDB" id="9803053at2"/>
<dbReference type="PhylomeDB" id="P23445"/>
<dbReference type="BioCyc" id="BSUB:BSU16240-MONOMER"/>
<dbReference type="Proteomes" id="UP000001570">
    <property type="component" value="Chromosome"/>
</dbReference>
<dbReference type="GO" id="GO:0005737">
    <property type="term" value="C:cytoplasm"/>
    <property type="evidence" value="ECO:0007669"/>
    <property type="project" value="UniProtKB-SubCell"/>
</dbReference>
<dbReference type="GO" id="GO:0030257">
    <property type="term" value="C:type III protein secretion system complex"/>
    <property type="evidence" value="ECO:0007669"/>
    <property type="project" value="InterPro"/>
</dbReference>
<dbReference type="GO" id="GO:0005524">
    <property type="term" value="F:ATP binding"/>
    <property type="evidence" value="ECO:0007669"/>
    <property type="project" value="UniProtKB-KW"/>
</dbReference>
<dbReference type="GO" id="GO:0016887">
    <property type="term" value="F:ATP hydrolysis activity"/>
    <property type="evidence" value="ECO:0007669"/>
    <property type="project" value="InterPro"/>
</dbReference>
<dbReference type="GO" id="GO:0044780">
    <property type="term" value="P:bacterial-type flagellum assembly"/>
    <property type="evidence" value="ECO:0000315"/>
    <property type="project" value="CACAO"/>
</dbReference>
<dbReference type="GO" id="GO:0071978">
    <property type="term" value="P:bacterial-type flagellum-dependent swarming motility"/>
    <property type="evidence" value="ECO:0000315"/>
    <property type="project" value="CACAO"/>
</dbReference>
<dbReference type="GO" id="GO:0030254">
    <property type="term" value="P:protein secretion by the type III secretion system"/>
    <property type="evidence" value="ECO:0007669"/>
    <property type="project" value="InterPro"/>
</dbReference>
<dbReference type="GO" id="GO:0015986">
    <property type="term" value="P:proton motive force-driven ATP synthesis"/>
    <property type="evidence" value="ECO:0007669"/>
    <property type="project" value="GOC"/>
</dbReference>
<dbReference type="GO" id="GO:1902600">
    <property type="term" value="P:proton transmembrane transport"/>
    <property type="evidence" value="ECO:0007669"/>
    <property type="project" value="UniProtKB-KW"/>
</dbReference>
<dbReference type="CDD" id="cd18114">
    <property type="entry name" value="ATP-synt_flagellum-secretory_path_III_C"/>
    <property type="match status" value="1"/>
</dbReference>
<dbReference type="CDD" id="cd18117">
    <property type="entry name" value="ATP-synt_flagellum-secretory_path_III_N"/>
    <property type="match status" value="1"/>
</dbReference>
<dbReference type="CDD" id="cd01136">
    <property type="entry name" value="ATPase_flagellum-secretory_path_III"/>
    <property type="match status" value="1"/>
</dbReference>
<dbReference type="FunFam" id="3.40.50.12240:FF:000002">
    <property type="entry name" value="Flagellum-specific ATP synthase FliI"/>
    <property type="match status" value="1"/>
</dbReference>
<dbReference type="Gene3D" id="3.40.50.12240">
    <property type="match status" value="1"/>
</dbReference>
<dbReference type="InterPro" id="IPR003593">
    <property type="entry name" value="AAA+_ATPase"/>
</dbReference>
<dbReference type="InterPro" id="IPR000225">
    <property type="entry name" value="Armadillo"/>
</dbReference>
<dbReference type="InterPro" id="IPR020003">
    <property type="entry name" value="ATPase_a/bsu_AS"/>
</dbReference>
<dbReference type="InterPro" id="IPR050053">
    <property type="entry name" value="ATPase_alpha/beta_chains"/>
</dbReference>
<dbReference type="InterPro" id="IPR004100">
    <property type="entry name" value="ATPase_F1/V1/A1_a/bsu_N"/>
</dbReference>
<dbReference type="InterPro" id="IPR000194">
    <property type="entry name" value="ATPase_F1/V1/A1_a/bsu_nucl-bd"/>
</dbReference>
<dbReference type="InterPro" id="IPR005714">
    <property type="entry name" value="ATPase_T3SS_FliI/YscN"/>
</dbReference>
<dbReference type="InterPro" id="IPR022425">
    <property type="entry name" value="FliI_clade2"/>
</dbReference>
<dbReference type="InterPro" id="IPR027417">
    <property type="entry name" value="P-loop_NTPase"/>
</dbReference>
<dbReference type="InterPro" id="IPR040627">
    <property type="entry name" value="T3SS_ATPase_C"/>
</dbReference>
<dbReference type="NCBIfam" id="TIGR03497">
    <property type="entry name" value="FliI_clade2"/>
    <property type="match status" value="1"/>
</dbReference>
<dbReference type="NCBIfam" id="TIGR01026">
    <property type="entry name" value="fliI_yscN"/>
    <property type="match status" value="1"/>
</dbReference>
<dbReference type="PANTHER" id="PTHR15184">
    <property type="entry name" value="ATP SYNTHASE"/>
    <property type="match status" value="1"/>
</dbReference>
<dbReference type="PANTHER" id="PTHR15184:SF9">
    <property type="entry name" value="SPI-1 TYPE 3 SECRETION SYSTEM ATPASE"/>
    <property type="match status" value="1"/>
</dbReference>
<dbReference type="Pfam" id="PF00006">
    <property type="entry name" value="ATP-synt_ab"/>
    <property type="match status" value="1"/>
</dbReference>
<dbReference type="Pfam" id="PF02874">
    <property type="entry name" value="ATP-synt_ab_N"/>
    <property type="match status" value="1"/>
</dbReference>
<dbReference type="Pfam" id="PF18269">
    <property type="entry name" value="T3SS_ATPase_C"/>
    <property type="match status" value="1"/>
</dbReference>
<dbReference type="SMART" id="SM00382">
    <property type="entry name" value="AAA"/>
    <property type="match status" value="1"/>
</dbReference>
<dbReference type="SUPFAM" id="SSF52540">
    <property type="entry name" value="P-loop containing nucleoside triphosphate hydrolases"/>
    <property type="match status" value="1"/>
</dbReference>
<dbReference type="PROSITE" id="PS00152">
    <property type="entry name" value="ATPASE_ALPHA_BETA"/>
    <property type="match status" value="1"/>
</dbReference>
<feature type="chain" id="PRO_0000144688" description="Flagellum-specific ATP synthase">
    <location>
        <begin position="1"/>
        <end position="438"/>
    </location>
</feature>
<feature type="region of interest" description="Disordered" evidence="3">
    <location>
        <begin position="119"/>
        <end position="139"/>
    </location>
</feature>
<feature type="binding site" evidence="1">
    <location>
        <begin position="165"/>
        <end position="172"/>
    </location>
    <ligand>
        <name>ATP</name>
        <dbReference type="ChEBI" id="CHEBI:30616"/>
    </ligand>
</feature>
<feature type="sequence conflict" description="In Ref. 1; CAA39523." evidence="4" ref="1">
    <original>MKTQSLIDCIE</original>
    <variation>MQLNEDTESDRLYR</variation>
    <location>
        <begin position="1"/>
        <end position="11"/>
    </location>
</feature>
<feature type="sequence conflict" description="In Ref. 1; CAA39523." evidence="4" ref="1">
    <original>GKLLPKGL</original>
    <variation>ESFCRKV</variation>
    <location>
        <begin position="113"/>
        <end position="120"/>
    </location>
</feature>
<comment type="function">
    <text>Probable catalytic subunit of a protein translocase for flagellum-specific export, or a proton translocase involved in local circuits at the flagellum.</text>
</comment>
<comment type="catalytic activity">
    <reaction evidence="2">
        <text>ATP + H2O + 4 H(+)(in) = ADP + phosphate + 5 H(+)(out)</text>
        <dbReference type="Rhea" id="RHEA:57720"/>
        <dbReference type="ChEBI" id="CHEBI:15377"/>
        <dbReference type="ChEBI" id="CHEBI:15378"/>
        <dbReference type="ChEBI" id="CHEBI:30616"/>
        <dbReference type="ChEBI" id="CHEBI:43474"/>
        <dbReference type="ChEBI" id="CHEBI:456216"/>
        <dbReference type="EC" id="7.1.2.2"/>
    </reaction>
</comment>
<comment type="subcellular location">
    <subcellularLocation>
        <location evidence="4">Cytoplasm</location>
    </subcellularLocation>
</comment>
<comment type="similarity">
    <text evidence="4">Belongs to the ATPase alpha/beta chains family.</text>
</comment>
<sequence>MKTQSLIDCIEMTDSYKRYGKVKRVIGLMIESKGPASSIGDLCLIYAKGQSGKVIKAEVVGFQEENILLMPYLEAASIAPGSIVEATGESLRVKVGTGLIGQVIDAFGEPLDGKLLPKGLSPVSTEQSPPNPMKRPPIREKMGVGVRSIDSLLTVGKGQRIGIFAGSGVGKSTLMGMIAKQTEADLNVIALVGERGREVREFIEKDLGKEGLKRSIVVVATSDQPALMRLKAAYTATAIAEYFRDKGQNVMFMMDSVTRVAMAQREIGLAAGEPPTTKGYTPSVFAILPRLLERTGANEHGTITAFYTVLVDGDDMNEPIADTVRGILDGHIVLDRALANKGQFPAVNVLKSISRVMSNISTKQHLDAANKFRELLSTYQNSEDLINIGAYKRGSSREIDEAIQFYPQLIQFLKQGTDEPALLEESIAALTSLTGNEE</sequence>